<reference key="1">
    <citation type="journal article" date="2008" name="Proc. Natl. Acad. Sci. U.S.A.">
        <title>The genome of Clostridium kluyveri, a strict anaerobe with unique metabolic features.</title>
        <authorList>
            <person name="Seedorf H."/>
            <person name="Fricke W.F."/>
            <person name="Veith B."/>
            <person name="Brueggemann H."/>
            <person name="Liesegang H."/>
            <person name="Strittmatter A."/>
            <person name="Miethke M."/>
            <person name="Buckel W."/>
            <person name="Hinderberger J."/>
            <person name="Li F."/>
            <person name="Hagemeier C."/>
            <person name="Thauer R.K."/>
            <person name="Gottschalk G."/>
        </authorList>
    </citation>
    <scope>NUCLEOTIDE SEQUENCE [LARGE SCALE GENOMIC DNA]</scope>
    <source>
        <strain>ATCC 8527 / DSM 555 / NBRC 12016 / NCIMB 10680 / K1</strain>
    </source>
</reference>
<dbReference type="EC" id="6.1.1.12" evidence="1"/>
<dbReference type="EMBL" id="CP000673">
    <property type="protein sequence ID" value="EDK35134.1"/>
    <property type="molecule type" value="Genomic_DNA"/>
</dbReference>
<dbReference type="RefSeq" id="WP_012103469.1">
    <property type="nucleotide sequence ID" value="NC_009706.1"/>
</dbReference>
<dbReference type="SMR" id="A5N1Y8"/>
<dbReference type="STRING" id="431943.CKL_3126"/>
<dbReference type="KEGG" id="ckl:CKL_3126"/>
<dbReference type="eggNOG" id="COG0173">
    <property type="taxonomic scope" value="Bacteria"/>
</dbReference>
<dbReference type="HOGENOM" id="CLU_014330_3_2_9"/>
<dbReference type="Proteomes" id="UP000002411">
    <property type="component" value="Chromosome"/>
</dbReference>
<dbReference type="GO" id="GO:0005737">
    <property type="term" value="C:cytoplasm"/>
    <property type="evidence" value="ECO:0007669"/>
    <property type="project" value="UniProtKB-SubCell"/>
</dbReference>
<dbReference type="GO" id="GO:0004815">
    <property type="term" value="F:aspartate-tRNA ligase activity"/>
    <property type="evidence" value="ECO:0007669"/>
    <property type="project" value="UniProtKB-UniRule"/>
</dbReference>
<dbReference type="GO" id="GO:0005524">
    <property type="term" value="F:ATP binding"/>
    <property type="evidence" value="ECO:0007669"/>
    <property type="project" value="UniProtKB-UniRule"/>
</dbReference>
<dbReference type="GO" id="GO:0140096">
    <property type="term" value="F:catalytic activity, acting on a protein"/>
    <property type="evidence" value="ECO:0007669"/>
    <property type="project" value="UniProtKB-ARBA"/>
</dbReference>
<dbReference type="GO" id="GO:0003676">
    <property type="term" value="F:nucleic acid binding"/>
    <property type="evidence" value="ECO:0007669"/>
    <property type="project" value="InterPro"/>
</dbReference>
<dbReference type="GO" id="GO:0016740">
    <property type="term" value="F:transferase activity"/>
    <property type="evidence" value="ECO:0007669"/>
    <property type="project" value="UniProtKB-ARBA"/>
</dbReference>
<dbReference type="GO" id="GO:0006422">
    <property type="term" value="P:aspartyl-tRNA aminoacylation"/>
    <property type="evidence" value="ECO:0007669"/>
    <property type="project" value="UniProtKB-UniRule"/>
</dbReference>
<dbReference type="CDD" id="cd00777">
    <property type="entry name" value="AspRS_core"/>
    <property type="match status" value="1"/>
</dbReference>
<dbReference type="CDD" id="cd04317">
    <property type="entry name" value="EcAspRS_like_N"/>
    <property type="match status" value="1"/>
</dbReference>
<dbReference type="Gene3D" id="3.30.930.10">
    <property type="entry name" value="Bira Bifunctional Protein, Domain 2"/>
    <property type="match status" value="1"/>
</dbReference>
<dbReference type="Gene3D" id="3.30.1360.30">
    <property type="entry name" value="GAD-like domain"/>
    <property type="match status" value="1"/>
</dbReference>
<dbReference type="Gene3D" id="2.40.50.140">
    <property type="entry name" value="Nucleic acid-binding proteins"/>
    <property type="match status" value="1"/>
</dbReference>
<dbReference type="HAMAP" id="MF_00044">
    <property type="entry name" value="Asp_tRNA_synth_type1"/>
    <property type="match status" value="1"/>
</dbReference>
<dbReference type="InterPro" id="IPR004364">
    <property type="entry name" value="Aa-tRNA-synt_II"/>
</dbReference>
<dbReference type="InterPro" id="IPR006195">
    <property type="entry name" value="aa-tRNA-synth_II"/>
</dbReference>
<dbReference type="InterPro" id="IPR045864">
    <property type="entry name" value="aa-tRNA-synth_II/BPL/LPL"/>
</dbReference>
<dbReference type="InterPro" id="IPR004524">
    <property type="entry name" value="Asp-tRNA-ligase_1"/>
</dbReference>
<dbReference type="InterPro" id="IPR047089">
    <property type="entry name" value="Asp-tRNA-ligase_1_N"/>
</dbReference>
<dbReference type="InterPro" id="IPR002312">
    <property type="entry name" value="Asp/Asn-tRNA-synth_IIb"/>
</dbReference>
<dbReference type="InterPro" id="IPR047090">
    <property type="entry name" value="AspRS_core"/>
</dbReference>
<dbReference type="InterPro" id="IPR004115">
    <property type="entry name" value="GAD-like_sf"/>
</dbReference>
<dbReference type="InterPro" id="IPR029351">
    <property type="entry name" value="GAD_dom"/>
</dbReference>
<dbReference type="InterPro" id="IPR012340">
    <property type="entry name" value="NA-bd_OB-fold"/>
</dbReference>
<dbReference type="InterPro" id="IPR004365">
    <property type="entry name" value="NA-bd_OB_tRNA"/>
</dbReference>
<dbReference type="NCBIfam" id="TIGR00459">
    <property type="entry name" value="aspS_bact"/>
    <property type="match status" value="1"/>
</dbReference>
<dbReference type="NCBIfam" id="NF001750">
    <property type="entry name" value="PRK00476.1"/>
    <property type="match status" value="1"/>
</dbReference>
<dbReference type="PANTHER" id="PTHR22594:SF5">
    <property type="entry name" value="ASPARTATE--TRNA LIGASE, MITOCHONDRIAL"/>
    <property type="match status" value="1"/>
</dbReference>
<dbReference type="PANTHER" id="PTHR22594">
    <property type="entry name" value="ASPARTYL/LYSYL-TRNA SYNTHETASE"/>
    <property type="match status" value="1"/>
</dbReference>
<dbReference type="Pfam" id="PF02938">
    <property type="entry name" value="GAD"/>
    <property type="match status" value="1"/>
</dbReference>
<dbReference type="Pfam" id="PF00152">
    <property type="entry name" value="tRNA-synt_2"/>
    <property type="match status" value="1"/>
</dbReference>
<dbReference type="Pfam" id="PF01336">
    <property type="entry name" value="tRNA_anti-codon"/>
    <property type="match status" value="1"/>
</dbReference>
<dbReference type="PRINTS" id="PR01042">
    <property type="entry name" value="TRNASYNTHASP"/>
</dbReference>
<dbReference type="SUPFAM" id="SSF55681">
    <property type="entry name" value="Class II aaRS and biotin synthetases"/>
    <property type="match status" value="1"/>
</dbReference>
<dbReference type="SUPFAM" id="SSF55261">
    <property type="entry name" value="GAD domain-like"/>
    <property type="match status" value="1"/>
</dbReference>
<dbReference type="SUPFAM" id="SSF50249">
    <property type="entry name" value="Nucleic acid-binding proteins"/>
    <property type="match status" value="1"/>
</dbReference>
<dbReference type="PROSITE" id="PS50862">
    <property type="entry name" value="AA_TRNA_LIGASE_II"/>
    <property type="match status" value="1"/>
</dbReference>
<accession>A5N1Y8</accession>
<evidence type="ECO:0000255" key="1">
    <source>
        <dbReference type="HAMAP-Rule" id="MF_00044"/>
    </source>
</evidence>
<protein>
    <recommendedName>
        <fullName evidence="1">Aspartate--tRNA ligase</fullName>
        <ecNumber evidence="1">6.1.1.12</ecNumber>
    </recommendedName>
    <alternativeName>
        <fullName evidence="1">Aspartyl-tRNA synthetase</fullName>
        <shortName evidence="1">AspRS</shortName>
    </alternativeName>
</protein>
<proteinExistence type="inferred from homology"/>
<sequence length="590" mass="67182">MGEELKTLKRTCMCGGLTEANIGDKITVMGWVQRKRNLGGLVFVDLRDRTGILQIVFGEAINKEAFEKSDSVKSEYCIAAVGTIVKRESPNMEIPTGMVELKGEYIKIFSESETPPIYIKENLDAAENIRLKYRYLDLRRPDMQRIFMLRHKTAKVIRDFLDEQGFLEIETPILGKSTPEGARDYLVPSRNYKGKYYALPQSPQLFKQLLMVSGYDRYFQIAKCFRDEDLRANRQPEFTQVDMEISFVDQEEVMDLNERLIQRVFKQILDVDVKLPIERMTYKTAMDKYGSDKPDLRFGMEINDISEVVKGVDFKVFQNALENGGSVRAIKVTGSAALGRKQLDKLVEFVKTYGASGLIWMAYKKEGIKCSISKFLTEEDTQNILNKMEAAEGDLILIVADKNKVVFESLGALRIHMAKQTGILEGNNDFKFVWITEFPLLSYNEEENRYQAEHHPFVMPMDEDIQYLESNPEKVRAKAYDIVLNGEELGGGSIRIHDTKLQEKMFGAIGISKDTAWNKFGYFLEALKFGPPPHGGLAYGFDRMIMFLAGTDNIKDVIAFPKNQNAFCPLTEAPNSVDKSQLKDLGIEVK</sequence>
<feature type="chain" id="PRO_1000074696" description="Aspartate--tRNA ligase">
    <location>
        <begin position="1"/>
        <end position="590"/>
    </location>
</feature>
<feature type="region of interest" description="Aspartate" evidence="1">
    <location>
        <begin position="204"/>
        <end position="207"/>
    </location>
</feature>
<feature type="binding site" evidence="1">
    <location>
        <position position="180"/>
    </location>
    <ligand>
        <name>L-aspartate</name>
        <dbReference type="ChEBI" id="CHEBI:29991"/>
    </ligand>
</feature>
<feature type="binding site" evidence="1">
    <location>
        <begin position="226"/>
        <end position="228"/>
    </location>
    <ligand>
        <name>ATP</name>
        <dbReference type="ChEBI" id="CHEBI:30616"/>
    </ligand>
</feature>
<feature type="binding site" evidence="1">
    <location>
        <position position="226"/>
    </location>
    <ligand>
        <name>L-aspartate</name>
        <dbReference type="ChEBI" id="CHEBI:29991"/>
    </ligand>
</feature>
<feature type="binding site" evidence="1">
    <location>
        <position position="235"/>
    </location>
    <ligand>
        <name>ATP</name>
        <dbReference type="ChEBI" id="CHEBI:30616"/>
    </ligand>
</feature>
<feature type="binding site" evidence="1">
    <location>
        <position position="454"/>
    </location>
    <ligand>
        <name>L-aspartate</name>
        <dbReference type="ChEBI" id="CHEBI:29991"/>
    </ligand>
</feature>
<feature type="binding site" evidence="1">
    <location>
        <position position="488"/>
    </location>
    <ligand>
        <name>ATP</name>
        <dbReference type="ChEBI" id="CHEBI:30616"/>
    </ligand>
</feature>
<feature type="binding site" evidence="1">
    <location>
        <position position="495"/>
    </location>
    <ligand>
        <name>L-aspartate</name>
        <dbReference type="ChEBI" id="CHEBI:29991"/>
    </ligand>
</feature>
<feature type="binding site" evidence="1">
    <location>
        <begin position="540"/>
        <end position="543"/>
    </location>
    <ligand>
        <name>ATP</name>
        <dbReference type="ChEBI" id="CHEBI:30616"/>
    </ligand>
</feature>
<comment type="function">
    <text evidence="1">Catalyzes the attachment of L-aspartate to tRNA(Asp) in a two-step reaction: L-aspartate is first activated by ATP to form Asp-AMP and then transferred to the acceptor end of tRNA(Asp).</text>
</comment>
<comment type="catalytic activity">
    <reaction evidence="1">
        <text>tRNA(Asp) + L-aspartate + ATP = L-aspartyl-tRNA(Asp) + AMP + diphosphate</text>
        <dbReference type="Rhea" id="RHEA:19649"/>
        <dbReference type="Rhea" id="RHEA-COMP:9660"/>
        <dbReference type="Rhea" id="RHEA-COMP:9678"/>
        <dbReference type="ChEBI" id="CHEBI:29991"/>
        <dbReference type="ChEBI" id="CHEBI:30616"/>
        <dbReference type="ChEBI" id="CHEBI:33019"/>
        <dbReference type="ChEBI" id="CHEBI:78442"/>
        <dbReference type="ChEBI" id="CHEBI:78516"/>
        <dbReference type="ChEBI" id="CHEBI:456215"/>
        <dbReference type="EC" id="6.1.1.12"/>
    </reaction>
</comment>
<comment type="subunit">
    <text evidence="1">Homodimer.</text>
</comment>
<comment type="subcellular location">
    <subcellularLocation>
        <location evidence="1">Cytoplasm</location>
    </subcellularLocation>
</comment>
<comment type="similarity">
    <text evidence="1">Belongs to the class-II aminoacyl-tRNA synthetase family. Type 1 subfamily.</text>
</comment>
<keyword id="KW-0030">Aminoacyl-tRNA synthetase</keyword>
<keyword id="KW-0067">ATP-binding</keyword>
<keyword id="KW-0963">Cytoplasm</keyword>
<keyword id="KW-0436">Ligase</keyword>
<keyword id="KW-0547">Nucleotide-binding</keyword>
<keyword id="KW-0648">Protein biosynthesis</keyword>
<keyword id="KW-1185">Reference proteome</keyword>
<gene>
    <name evidence="1" type="primary">aspS</name>
    <name type="ordered locus">CKL_3126</name>
</gene>
<organism>
    <name type="scientific">Clostridium kluyveri (strain ATCC 8527 / DSM 555 / NBRC 12016 / NCIMB 10680 / K1)</name>
    <dbReference type="NCBI Taxonomy" id="431943"/>
    <lineage>
        <taxon>Bacteria</taxon>
        <taxon>Bacillati</taxon>
        <taxon>Bacillota</taxon>
        <taxon>Clostridia</taxon>
        <taxon>Eubacteriales</taxon>
        <taxon>Clostridiaceae</taxon>
        <taxon>Clostridium</taxon>
    </lineage>
</organism>
<name>SYD_CLOK5</name>